<feature type="chain" id="PRO_0000111610" description="Ribonuclease HII">
    <location>
        <begin position="1"/>
        <end position="216"/>
    </location>
</feature>
<feature type="domain" description="RNase H type-2" evidence="2">
    <location>
        <begin position="33"/>
        <end position="216"/>
    </location>
</feature>
<feature type="binding site" evidence="1">
    <location>
        <position position="39"/>
    </location>
    <ligand>
        <name>a divalent metal cation</name>
        <dbReference type="ChEBI" id="CHEBI:60240"/>
    </ligand>
</feature>
<feature type="binding site" evidence="1">
    <location>
        <position position="40"/>
    </location>
    <ligand>
        <name>a divalent metal cation</name>
        <dbReference type="ChEBI" id="CHEBI:60240"/>
    </ligand>
</feature>
<feature type="binding site" evidence="1">
    <location>
        <position position="130"/>
    </location>
    <ligand>
        <name>a divalent metal cation</name>
        <dbReference type="ChEBI" id="CHEBI:60240"/>
    </ligand>
</feature>
<gene>
    <name evidence="1" type="primary">rnhB</name>
    <name type="ordered locus">R00839</name>
    <name type="ORF">SMc00867</name>
</gene>
<name>RNH2_RHIME</name>
<evidence type="ECO:0000255" key="1">
    <source>
        <dbReference type="HAMAP-Rule" id="MF_00052"/>
    </source>
</evidence>
<evidence type="ECO:0000255" key="2">
    <source>
        <dbReference type="PROSITE-ProRule" id="PRU01319"/>
    </source>
</evidence>
<reference key="1">
    <citation type="journal article" date="2001" name="Proc. Natl. Acad. Sci. U.S.A.">
        <title>Analysis of the chromosome sequence of the legume symbiont Sinorhizobium meliloti strain 1021.</title>
        <authorList>
            <person name="Capela D."/>
            <person name="Barloy-Hubler F."/>
            <person name="Gouzy J."/>
            <person name="Bothe G."/>
            <person name="Ampe F."/>
            <person name="Batut J."/>
            <person name="Boistard P."/>
            <person name="Becker A."/>
            <person name="Boutry M."/>
            <person name="Cadieu E."/>
            <person name="Dreano S."/>
            <person name="Gloux S."/>
            <person name="Godrie T."/>
            <person name="Goffeau A."/>
            <person name="Kahn D."/>
            <person name="Kiss E."/>
            <person name="Lelaure V."/>
            <person name="Masuy D."/>
            <person name="Pohl T."/>
            <person name="Portetelle D."/>
            <person name="Puehler A."/>
            <person name="Purnelle B."/>
            <person name="Ramsperger U."/>
            <person name="Renard C."/>
            <person name="Thebault P."/>
            <person name="Vandenbol M."/>
            <person name="Weidner S."/>
            <person name="Galibert F."/>
        </authorList>
    </citation>
    <scope>NUCLEOTIDE SEQUENCE [LARGE SCALE GENOMIC DNA]</scope>
    <source>
        <strain>1021</strain>
    </source>
</reference>
<reference key="2">
    <citation type="journal article" date="2001" name="Science">
        <title>The composite genome of the legume symbiont Sinorhizobium meliloti.</title>
        <authorList>
            <person name="Galibert F."/>
            <person name="Finan T.M."/>
            <person name="Long S.R."/>
            <person name="Puehler A."/>
            <person name="Abola P."/>
            <person name="Ampe F."/>
            <person name="Barloy-Hubler F."/>
            <person name="Barnett M.J."/>
            <person name="Becker A."/>
            <person name="Boistard P."/>
            <person name="Bothe G."/>
            <person name="Boutry M."/>
            <person name="Bowser L."/>
            <person name="Buhrmester J."/>
            <person name="Cadieu E."/>
            <person name="Capela D."/>
            <person name="Chain P."/>
            <person name="Cowie A."/>
            <person name="Davis R.W."/>
            <person name="Dreano S."/>
            <person name="Federspiel N.A."/>
            <person name="Fisher R.F."/>
            <person name="Gloux S."/>
            <person name="Godrie T."/>
            <person name="Goffeau A."/>
            <person name="Golding B."/>
            <person name="Gouzy J."/>
            <person name="Gurjal M."/>
            <person name="Hernandez-Lucas I."/>
            <person name="Hong A."/>
            <person name="Huizar L."/>
            <person name="Hyman R.W."/>
            <person name="Jones T."/>
            <person name="Kahn D."/>
            <person name="Kahn M.L."/>
            <person name="Kalman S."/>
            <person name="Keating D.H."/>
            <person name="Kiss E."/>
            <person name="Komp C."/>
            <person name="Lelaure V."/>
            <person name="Masuy D."/>
            <person name="Palm C."/>
            <person name="Peck M.C."/>
            <person name="Pohl T.M."/>
            <person name="Portetelle D."/>
            <person name="Purnelle B."/>
            <person name="Ramsperger U."/>
            <person name="Surzycki R."/>
            <person name="Thebault P."/>
            <person name="Vandenbol M."/>
            <person name="Vorhoelter F.J."/>
            <person name="Weidner S."/>
            <person name="Wells D.H."/>
            <person name="Wong K."/>
            <person name="Yeh K.-C."/>
            <person name="Batut J."/>
        </authorList>
    </citation>
    <scope>NUCLEOTIDE SEQUENCE [LARGE SCALE GENOMIC DNA]</scope>
    <source>
        <strain>1021</strain>
    </source>
</reference>
<sequence>MSRRKQPDSPLFPLQAPVPDFTFERAAHRDGFWPVAGADEAGRGPLAGPVVAAAVILDPDAIPAGLNDSKLLTAEQREALFEEILATSTVSIASSSSARIDTTDILKASLDAMRRAVHGLELAARIVLVDGRDVPPGLSCHAKAIVKGDSRSVSIAAASIVAKVTRDRMMARADATFPLYGFAHHAGYATVKHRTAIESHGPCSLHRMSFRPFRQV</sequence>
<accession>Q92RM4</accession>
<organism>
    <name type="scientific">Rhizobium meliloti (strain 1021)</name>
    <name type="common">Ensifer meliloti</name>
    <name type="synonym">Sinorhizobium meliloti</name>
    <dbReference type="NCBI Taxonomy" id="266834"/>
    <lineage>
        <taxon>Bacteria</taxon>
        <taxon>Pseudomonadati</taxon>
        <taxon>Pseudomonadota</taxon>
        <taxon>Alphaproteobacteria</taxon>
        <taxon>Hyphomicrobiales</taxon>
        <taxon>Rhizobiaceae</taxon>
        <taxon>Sinorhizobium/Ensifer group</taxon>
        <taxon>Sinorhizobium</taxon>
    </lineage>
</organism>
<dbReference type="EC" id="3.1.26.4" evidence="1"/>
<dbReference type="EMBL" id="AL591688">
    <property type="protein sequence ID" value="CAC45411.1"/>
    <property type="molecule type" value="Genomic_DNA"/>
</dbReference>
<dbReference type="RefSeq" id="NP_384945.1">
    <property type="nucleotide sequence ID" value="NC_003047.1"/>
</dbReference>
<dbReference type="RefSeq" id="WP_003533269.1">
    <property type="nucleotide sequence ID" value="NC_003047.1"/>
</dbReference>
<dbReference type="SMR" id="Q92RM4"/>
<dbReference type="EnsemblBacteria" id="CAC45411">
    <property type="protein sequence ID" value="CAC45411"/>
    <property type="gene ID" value="SMc00867"/>
</dbReference>
<dbReference type="KEGG" id="sme:SMc00867"/>
<dbReference type="PATRIC" id="fig|266834.11.peg.2231"/>
<dbReference type="eggNOG" id="COG0164">
    <property type="taxonomic scope" value="Bacteria"/>
</dbReference>
<dbReference type="HOGENOM" id="CLU_036532_3_2_5"/>
<dbReference type="OrthoDB" id="9803420at2"/>
<dbReference type="Proteomes" id="UP000001976">
    <property type="component" value="Chromosome"/>
</dbReference>
<dbReference type="GO" id="GO:0005737">
    <property type="term" value="C:cytoplasm"/>
    <property type="evidence" value="ECO:0007669"/>
    <property type="project" value="UniProtKB-SubCell"/>
</dbReference>
<dbReference type="GO" id="GO:0032299">
    <property type="term" value="C:ribonuclease H2 complex"/>
    <property type="evidence" value="ECO:0007669"/>
    <property type="project" value="TreeGrafter"/>
</dbReference>
<dbReference type="GO" id="GO:0030145">
    <property type="term" value="F:manganese ion binding"/>
    <property type="evidence" value="ECO:0007669"/>
    <property type="project" value="UniProtKB-UniRule"/>
</dbReference>
<dbReference type="GO" id="GO:0003723">
    <property type="term" value="F:RNA binding"/>
    <property type="evidence" value="ECO:0007669"/>
    <property type="project" value="InterPro"/>
</dbReference>
<dbReference type="GO" id="GO:0004523">
    <property type="term" value="F:RNA-DNA hybrid ribonuclease activity"/>
    <property type="evidence" value="ECO:0007669"/>
    <property type="project" value="UniProtKB-UniRule"/>
</dbReference>
<dbReference type="GO" id="GO:0043137">
    <property type="term" value="P:DNA replication, removal of RNA primer"/>
    <property type="evidence" value="ECO:0007669"/>
    <property type="project" value="TreeGrafter"/>
</dbReference>
<dbReference type="GO" id="GO:0006298">
    <property type="term" value="P:mismatch repair"/>
    <property type="evidence" value="ECO:0007669"/>
    <property type="project" value="TreeGrafter"/>
</dbReference>
<dbReference type="CDD" id="cd07182">
    <property type="entry name" value="RNase_HII_bacteria_HII_like"/>
    <property type="match status" value="1"/>
</dbReference>
<dbReference type="Gene3D" id="3.30.420.10">
    <property type="entry name" value="Ribonuclease H-like superfamily/Ribonuclease H"/>
    <property type="match status" value="1"/>
</dbReference>
<dbReference type="HAMAP" id="MF_00052_B">
    <property type="entry name" value="RNase_HII_B"/>
    <property type="match status" value="1"/>
</dbReference>
<dbReference type="InterPro" id="IPR022898">
    <property type="entry name" value="RNase_HII"/>
</dbReference>
<dbReference type="InterPro" id="IPR001352">
    <property type="entry name" value="RNase_HII/HIII"/>
</dbReference>
<dbReference type="InterPro" id="IPR024567">
    <property type="entry name" value="RNase_HII/HIII_dom"/>
</dbReference>
<dbReference type="InterPro" id="IPR012337">
    <property type="entry name" value="RNaseH-like_sf"/>
</dbReference>
<dbReference type="InterPro" id="IPR036397">
    <property type="entry name" value="RNaseH_sf"/>
</dbReference>
<dbReference type="NCBIfam" id="NF000595">
    <property type="entry name" value="PRK00015.1-3"/>
    <property type="match status" value="1"/>
</dbReference>
<dbReference type="PANTHER" id="PTHR10954">
    <property type="entry name" value="RIBONUCLEASE H2 SUBUNIT A"/>
    <property type="match status" value="1"/>
</dbReference>
<dbReference type="PANTHER" id="PTHR10954:SF18">
    <property type="entry name" value="RIBONUCLEASE HII"/>
    <property type="match status" value="1"/>
</dbReference>
<dbReference type="Pfam" id="PF01351">
    <property type="entry name" value="RNase_HII"/>
    <property type="match status" value="1"/>
</dbReference>
<dbReference type="SUPFAM" id="SSF53098">
    <property type="entry name" value="Ribonuclease H-like"/>
    <property type="match status" value="1"/>
</dbReference>
<dbReference type="PROSITE" id="PS51975">
    <property type="entry name" value="RNASE_H_2"/>
    <property type="match status" value="1"/>
</dbReference>
<keyword id="KW-0963">Cytoplasm</keyword>
<keyword id="KW-0255">Endonuclease</keyword>
<keyword id="KW-0378">Hydrolase</keyword>
<keyword id="KW-0464">Manganese</keyword>
<keyword id="KW-0479">Metal-binding</keyword>
<keyword id="KW-0540">Nuclease</keyword>
<keyword id="KW-1185">Reference proteome</keyword>
<comment type="function">
    <text evidence="1">Endonuclease that specifically degrades the RNA of RNA-DNA hybrids.</text>
</comment>
<comment type="catalytic activity">
    <reaction evidence="1">
        <text>Endonucleolytic cleavage to 5'-phosphomonoester.</text>
        <dbReference type="EC" id="3.1.26.4"/>
    </reaction>
</comment>
<comment type="cofactor">
    <cofactor evidence="1">
        <name>Mn(2+)</name>
        <dbReference type="ChEBI" id="CHEBI:29035"/>
    </cofactor>
    <cofactor evidence="1">
        <name>Mg(2+)</name>
        <dbReference type="ChEBI" id="CHEBI:18420"/>
    </cofactor>
    <text evidence="1">Manganese or magnesium. Binds 1 divalent metal ion per monomer in the absence of substrate. May bind a second metal ion after substrate binding.</text>
</comment>
<comment type="subcellular location">
    <subcellularLocation>
        <location evidence="1">Cytoplasm</location>
    </subcellularLocation>
</comment>
<comment type="similarity">
    <text evidence="1">Belongs to the RNase HII family.</text>
</comment>
<proteinExistence type="inferred from homology"/>
<protein>
    <recommendedName>
        <fullName evidence="1">Ribonuclease HII</fullName>
        <shortName evidence="1">RNase HII</shortName>
        <ecNumber evidence="1">3.1.26.4</ecNumber>
    </recommendedName>
</protein>